<name>HRCA_BURCJ</name>
<protein>
    <recommendedName>
        <fullName evidence="1">Heat-inducible transcription repressor HrcA</fullName>
    </recommendedName>
</protein>
<feature type="chain" id="PRO_1000092797" description="Heat-inducible transcription repressor HrcA">
    <location>
        <begin position="1"/>
        <end position="340"/>
    </location>
</feature>
<organism>
    <name type="scientific">Burkholderia cenocepacia (strain ATCC BAA-245 / DSM 16553 / LMG 16656 / NCTC 13227 / J2315 / CF5610)</name>
    <name type="common">Burkholderia cepacia (strain J2315)</name>
    <dbReference type="NCBI Taxonomy" id="216591"/>
    <lineage>
        <taxon>Bacteria</taxon>
        <taxon>Pseudomonadati</taxon>
        <taxon>Pseudomonadota</taxon>
        <taxon>Betaproteobacteria</taxon>
        <taxon>Burkholderiales</taxon>
        <taxon>Burkholderiaceae</taxon>
        <taxon>Burkholderia</taxon>
        <taxon>Burkholderia cepacia complex</taxon>
    </lineage>
</organism>
<proteinExistence type="inferred from homology"/>
<gene>
    <name evidence="1" type="primary">hrcA</name>
    <name type="ordered locus">BceJ2315_32150</name>
    <name type="ORF">BCAL3275</name>
</gene>
<comment type="function">
    <text evidence="1">Negative regulator of class I heat shock genes (grpE-dnaK-dnaJ and groELS operons). Prevents heat-shock induction of these operons.</text>
</comment>
<comment type="similarity">
    <text evidence="1">Belongs to the HrcA family.</text>
</comment>
<reference key="1">
    <citation type="journal article" date="2009" name="J. Bacteriol.">
        <title>The genome of Burkholderia cenocepacia J2315, an epidemic pathogen of cystic fibrosis patients.</title>
        <authorList>
            <person name="Holden M.T."/>
            <person name="Seth-Smith H.M."/>
            <person name="Crossman L.C."/>
            <person name="Sebaihia M."/>
            <person name="Bentley S.D."/>
            <person name="Cerdeno-Tarraga A.M."/>
            <person name="Thomson N.R."/>
            <person name="Bason N."/>
            <person name="Quail M.A."/>
            <person name="Sharp S."/>
            <person name="Cherevach I."/>
            <person name="Churcher C."/>
            <person name="Goodhead I."/>
            <person name="Hauser H."/>
            <person name="Holroyd N."/>
            <person name="Mungall K."/>
            <person name="Scott P."/>
            <person name="Walker D."/>
            <person name="White B."/>
            <person name="Rose H."/>
            <person name="Iversen P."/>
            <person name="Mil-Homens D."/>
            <person name="Rocha E.P."/>
            <person name="Fialho A.M."/>
            <person name="Baldwin A."/>
            <person name="Dowson C."/>
            <person name="Barrell B.G."/>
            <person name="Govan J.R."/>
            <person name="Vandamme P."/>
            <person name="Hart C.A."/>
            <person name="Mahenthiralingam E."/>
            <person name="Parkhill J."/>
        </authorList>
    </citation>
    <scope>NUCLEOTIDE SEQUENCE [LARGE SCALE GENOMIC DNA]</scope>
    <source>
        <strain>ATCC BAA-245 / DSM 16553 / LMG 16656 / NCTC 13227 / J2315 / CF5610</strain>
    </source>
</reference>
<sequence>MLDPRARTLLKTLIERYIADGQPVGSRTLSRYSGLELSPATIRNVMSDLEELGLVSSPHTSAGRIPTPRGYRLFVDTMLTVEAPIDAEAVARQVQNTLQAGEPQQRVVAAAASVLSNLSQFAGVVLTPRRSHVFKQIEFMRLSDKRILLIIVTPEGDVQNRMLATPRDYSPSQLTEASNYINAHFAGLSFDEVRRRLRDEIDQLRGDMTTLMHAAVTASTEVPDTEDTVLISGERNLLEVADLSSDMARLRKLFDVFDQKTGLLQLLDVSSHAQGVQIFIGGESTLVPIEEMSVVTAPYEVNGKIVGTLGVIGPTRMAYNRVIPIVDITARLLSLTLSQQ</sequence>
<accession>B4EDZ7</accession>
<keyword id="KW-0678">Repressor</keyword>
<keyword id="KW-0346">Stress response</keyword>
<keyword id="KW-0804">Transcription</keyword>
<keyword id="KW-0805">Transcription regulation</keyword>
<dbReference type="EMBL" id="AM747720">
    <property type="protein sequence ID" value="CAR53599.1"/>
    <property type="molecule type" value="Genomic_DNA"/>
</dbReference>
<dbReference type="RefSeq" id="WP_006484956.1">
    <property type="nucleotide sequence ID" value="NC_011000.1"/>
</dbReference>
<dbReference type="SMR" id="B4EDZ7"/>
<dbReference type="GeneID" id="56557184"/>
<dbReference type="KEGG" id="bcj:BCAL3275"/>
<dbReference type="eggNOG" id="COG1420">
    <property type="taxonomic scope" value="Bacteria"/>
</dbReference>
<dbReference type="HOGENOM" id="CLU_050019_0_0_4"/>
<dbReference type="BioCyc" id="BCEN216591:G1G1V-3647-MONOMER"/>
<dbReference type="Proteomes" id="UP000001035">
    <property type="component" value="Chromosome 1"/>
</dbReference>
<dbReference type="GO" id="GO:0003677">
    <property type="term" value="F:DNA binding"/>
    <property type="evidence" value="ECO:0007669"/>
    <property type="project" value="InterPro"/>
</dbReference>
<dbReference type="GO" id="GO:0045892">
    <property type="term" value="P:negative regulation of DNA-templated transcription"/>
    <property type="evidence" value="ECO:0007669"/>
    <property type="project" value="UniProtKB-UniRule"/>
</dbReference>
<dbReference type="Gene3D" id="3.30.450.40">
    <property type="match status" value="1"/>
</dbReference>
<dbReference type="Gene3D" id="3.30.390.60">
    <property type="entry name" value="Heat-inducible transcription repressor hrca homolog, domain 3"/>
    <property type="match status" value="1"/>
</dbReference>
<dbReference type="Gene3D" id="1.10.10.10">
    <property type="entry name" value="Winged helix-like DNA-binding domain superfamily/Winged helix DNA-binding domain"/>
    <property type="match status" value="1"/>
</dbReference>
<dbReference type="HAMAP" id="MF_00081">
    <property type="entry name" value="HrcA"/>
    <property type="match status" value="1"/>
</dbReference>
<dbReference type="InterPro" id="IPR029016">
    <property type="entry name" value="GAF-like_dom_sf"/>
</dbReference>
<dbReference type="InterPro" id="IPR002571">
    <property type="entry name" value="HrcA"/>
</dbReference>
<dbReference type="InterPro" id="IPR021153">
    <property type="entry name" value="HrcA_C"/>
</dbReference>
<dbReference type="InterPro" id="IPR036388">
    <property type="entry name" value="WH-like_DNA-bd_sf"/>
</dbReference>
<dbReference type="InterPro" id="IPR036390">
    <property type="entry name" value="WH_DNA-bd_sf"/>
</dbReference>
<dbReference type="InterPro" id="IPR005104">
    <property type="entry name" value="WHTH_HrcA_DNA-bd"/>
</dbReference>
<dbReference type="InterPro" id="IPR023120">
    <property type="entry name" value="WHTH_transcript_rep_HrcA_IDD"/>
</dbReference>
<dbReference type="NCBIfam" id="TIGR00331">
    <property type="entry name" value="hrcA"/>
    <property type="match status" value="1"/>
</dbReference>
<dbReference type="PANTHER" id="PTHR34824">
    <property type="entry name" value="HEAT-INDUCIBLE TRANSCRIPTION REPRESSOR HRCA"/>
    <property type="match status" value="1"/>
</dbReference>
<dbReference type="PANTHER" id="PTHR34824:SF1">
    <property type="entry name" value="HEAT-INDUCIBLE TRANSCRIPTION REPRESSOR HRCA"/>
    <property type="match status" value="1"/>
</dbReference>
<dbReference type="Pfam" id="PF01628">
    <property type="entry name" value="HrcA"/>
    <property type="match status" value="1"/>
</dbReference>
<dbReference type="Pfam" id="PF03444">
    <property type="entry name" value="HrcA_DNA-bdg"/>
    <property type="match status" value="1"/>
</dbReference>
<dbReference type="PIRSF" id="PIRSF005485">
    <property type="entry name" value="HrcA"/>
    <property type="match status" value="1"/>
</dbReference>
<dbReference type="SUPFAM" id="SSF55781">
    <property type="entry name" value="GAF domain-like"/>
    <property type="match status" value="1"/>
</dbReference>
<dbReference type="SUPFAM" id="SSF46785">
    <property type="entry name" value="Winged helix' DNA-binding domain"/>
    <property type="match status" value="1"/>
</dbReference>
<evidence type="ECO:0000255" key="1">
    <source>
        <dbReference type="HAMAP-Rule" id="MF_00081"/>
    </source>
</evidence>